<evidence type="ECO:0000255" key="1">
    <source>
        <dbReference type="HAMAP-Rule" id="MF_00391"/>
    </source>
</evidence>
<evidence type="ECO:0000256" key="2">
    <source>
        <dbReference type="SAM" id="MobiDB-lite"/>
    </source>
</evidence>
<evidence type="ECO:0000305" key="3"/>
<organism>
    <name type="scientific">Acinetobacter baumannii (strain AYE)</name>
    <dbReference type="NCBI Taxonomy" id="509173"/>
    <lineage>
        <taxon>Bacteria</taxon>
        <taxon>Pseudomonadati</taxon>
        <taxon>Pseudomonadota</taxon>
        <taxon>Gammaproteobacteria</taxon>
        <taxon>Moraxellales</taxon>
        <taxon>Moraxellaceae</taxon>
        <taxon>Acinetobacter</taxon>
        <taxon>Acinetobacter calcoaceticus/baumannii complex</taxon>
    </lineage>
</organism>
<keyword id="KW-0687">Ribonucleoprotein</keyword>
<keyword id="KW-0689">Ribosomal protein</keyword>
<comment type="similarity">
    <text evidence="1">Belongs to the bacterial ribosomal protein bL34 family.</text>
</comment>
<sequence length="44" mass="5175">MKRTFQPSELKRKRVHGFRARMATKAGRQVLARRRAKGRHSLTV</sequence>
<dbReference type="EMBL" id="CU459141">
    <property type="protein sequence ID" value="CAM88652.1"/>
    <property type="molecule type" value="Genomic_DNA"/>
</dbReference>
<dbReference type="RefSeq" id="WP_000831329.1">
    <property type="nucleotide sequence ID" value="NZ_JBDGFB010000009.1"/>
</dbReference>
<dbReference type="SMR" id="B0V5R3"/>
<dbReference type="EnsemblBacteria" id="CAM88652">
    <property type="protein sequence ID" value="CAM88652"/>
    <property type="gene ID" value="ABAYE3903"/>
</dbReference>
<dbReference type="GeneID" id="97427695"/>
<dbReference type="KEGG" id="aby:ABAYE3903"/>
<dbReference type="HOGENOM" id="CLU_129938_2_0_6"/>
<dbReference type="GO" id="GO:1990904">
    <property type="term" value="C:ribonucleoprotein complex"/>
    <property type="evidence" value="ECO:0007669"/>
    <property type="project" value="UniProtKB-KW"/>
</dbReference>
<dbReference type="GO" id="GO:0005840">
    <property type="term" value="C:ribosome"/>
    <property type="evidence" value="ECO:0007669"/>
    <property type="project" value="UniProtKB-KW"/>
</dbReference>
<dbReference type="GO" id="GO:0003735">
    <property type="term" value="F:structural constituent of ribosome"/>
    <property type="evidence" value="ECO:0007669"/>
    <property type="project" value="InterPro"/>
</dbReference>
<dbReference type="GO" id="GO:0006412">
    <property type="term" value="P:translation"/>
    <property type="evidence" value="ECO:0007669"/>
    <property type="project" value="UniProtKB-UniRule"/>
</dbReference>
<dbReference type="FunFam" id="1.10.287.3980:FF:000001">
    <property type="entry name" value="Mitochondrial ribosomal protein L34"/>
    <property type="match status" value="1"/>
</dbReference>
<dbReference type="Gene3D" id="1.10.287.3980">
    <property type="match status" value="1"/>
</dbReference>
<dbReference type="HAMAP" id="MF_00391">
    <property type="entry name" value="Ribosomal_bL34"/>
    <property type="match status" value="1"/>
</dbReference>
<dbReference type="InterPro" id="IPR000271">
    <property type="entry name" value="Ribosomal_bL34"/>
</dbReference>
<dbReference type="InterPro" id="IPR020939">
    <property type="entry name" value="Ribosomal_bL34_CS"/>
</dbReference>
<dbReference type="NCBIfam" id="TIGR01030">
    <property type="entry name" value="rpmH_bact"/>
    <property type="match status" value="1"/>
</dbReference>
<dbReference type="PANTHER" id="PTHR14503:SF4">
    <property type="entry name" value="LARGE RIBOSOMAL SUBUNIT PROTEIN BL34M"/>
    <property type="match status" value="1"/>
</dbReference>
<dbReference type="PANTHER" id="PTHR14503">
    <property type="entry name" value="MITOCHONDRIAL RIBOSOMAL PROTEIN 34 FAMILY MEMBER"/>
    <property type="match status" value="1"/>
</dbReference>
<dbReference type="Pfam" id="PF00468">
    <property type="entry name" value="Ribosomal_L34"/>
    <property type="match status" value="1"/>
</dbReference>
<dbReference type="PROSITE" id="PS00784">
    <property type="entry name" value="RIBOSOMAL_L34"/>
    <property type="match status" value="1"/>
</dbReference>
<feature type="chain" id="PRO_1000122884" description="Large ribosomal subunit protein bL34">
    <location>
        <begin position="1"/>
        <end position="44"/>
    </location>
</feature>
<feature type="region of interest" description="Disordered" evidence="2">
    <location>
        <begin position="24"/>
        <end position="44"/>
    </location>
</feature>
<feature type="compositionally biased region" description="Basic residues" evidence="2">
    <location>
        <begin position="31"/>
        <end position="44"/>
    </location>
</feature>
<gene>
    <name evidence="1" type="primary">rpmH</name>
    <name type="ordered locus">ABAYE3903</name>
</gene>
<name>RL34_ACIBY</name>
<proteinExistence type="inferred from homology"/>
<reference key="1">
    <citation type="journal article" date="2008" name="PLoS ONE">
        <title>Comparative analysis of Acinetobacters: three genomes for three lifestyles.</title>
        <authorList>
            <person name="Vallenet D."/>
            <person name="Nordmann P."/>
            <person name="Barbe V."/>
            <person name="Poirel L."/>
            <person name="Mangenot S."/>
            <person name="Bataille E."/>
            <person name="Dossat C."/>
            <person name="Gas S."/>
            <person name="Kreimeyer A."/>
            <person name="Lenoble P."/>
            <person name="Oztas S."/>
            <person name="Poulain J."/>
            <person name="Segurens B."/>
            <person name="Robert C."/>
            <person name="Abergel C."/>
            <person name="Claverie J.-M."/>
            <person name="Raoult D."/>
            <person name="Medigue C."/>
            <person name="Weissenbach J."/>
            <person name="Cruveiller S."/>
        </authorList>
    </citation>
    <scope>NUCLEOTIDE SEQUENCE [LARGE SCALE GENOMIC DNA]</scope>
    <source>
        <strain>AYE</strain>
    </source>
</reference>
<protein>
    <recommendedName>
        <fullName evidence="1">Large ribosomal subunit protein bL34</fullName>
    </recommendedName>
    <alternativeName>
        <fullName evidence="3">50S ribosomal protein L34</fullName>
    </alternativeName>
</protein>
<accession>B0V5R3</accession>